<proteinExistence type="inferred from homology"/>
<organism>
    <name type="scientific">Vibrio parahaemolyticus serotype O3:K6 (strain RIMD 2210633)</name>
    <dbReference type="NCBI Taxonomy" id="223926"/>
    <lineage>
        <taxon>Bacteria</taxon>
        <taxon>Pseudomonadati</taxon>
        <taxon>Pseudomonadota</taxon>
        <taxon>Gammaproteobacteria</taxon>
        <taxon>Vibrionales</taxon>
        <taxon>Vibrionaceae</taxon>
        <taxon>Vibrio</taxon>
    </lineage>
</organism>
<gene>
    <name evidence="1" type="primary">msbA</name>
    <name type="ordered locus">VP0982</name>
</gene>
<keyword id="KW-0067">ATP-binding</keyword>
<keyword id="KW-0997">Cell inner membrane</keyword>
<keyword id="KW-1003">Cell membrane</keyword>
<keyword id="KW-0445">Lipid transport</keyword>
<keyword id="KW-0472">Membrane</keyword>
<keyword id="KW-0547">Nucleotide-binding</keyword>
<keyword id="KW-1278">Translocase</keyword>
<keyword id="KW-0812">Transmembrane</keyword>
<keyword id="KW-1133">Transmembrane helix</keyword>
<keyword id="KW-0813">Transport</keyword>
<evidence type="ECO:0000255" key="1">
    <source>
        <dbReference type="HAMAP-Rule" id="MF_01703"/>
    </source>
</evidence>
<sequence>MSINTDETTWQTFKRLWQFIRLYKSGLIVAVIALVINAISDTYMISLLKPLLDEGFGNADSDFLRTLPLIIFVMMFIRGTSGFVSTYCLSWVSGNVVMLVRRMVFNHFMHMPVSYFDKEKTGNLLSRITYDSEQVSAATSQALVSIVREGASIIGLLVLMFYNSWQLSLVLFAVAPVVAWGIGVVSKRFRKISKNMQTMMGNVTASAEQMLKGHKVVLSYGGQDIERQRFDKVSNQMRQQSMKLVTAQAAANPIIQMIASFAIVAVLYLASIDSIKEQLTPGTFTVVFSAMFGLMRPLKALTNVTSQFQRGMAASQTLFALIDLEPEKNEGKYTVERAKGDVSVKDVSFTYVGSEKPALEHVSFDIPRGKTVALVGRSGSGKSTIANLFNRFYDVDSGSITLDGRDIRDYELKNLREQFALVSQNVHLFNDTIANNIAYATEDKYERSDIEHAAKLAHAMEFINKMENGLDTMIGENGASLSGGQRQRVAIARALLRDAPVLILDEATSALDTESERAIQAALDELQKDKTVLVIAHRLSTIEKADEILVVDDGAIIERGNHADLIAKNGAYAQLHRIQFGE</sequence>
<reference key="1">
    <citation type="journal article" date="2003" name="Lancet">
        <title>Genome sequence of Vibrio parahaemolyticus: a pathogenic mechanism distinct from that of V. cholerae.</title>
        <authorList>
            <person name="Makino K."/>
            <person name="Oshima K."/>
            <person name="Kurokawa K."/>
            <person name="Yokoyama K."/>
            <person name="Uda T."/>
            <person name="Tagomori K."/>
            <person name="Iijima Y."/>
            <person name="Najima M."/>
            <person name="Nakano M."/>
            <person name="Yamashita A."/>
            <person name="Kubota Y."/>
            <person name="Kimura S."/>
            <person name="Yasunaga T."/>
            <person name="Honda T."/>
            <person name="Shinagawa H."/>
            <person name="Hattori M."/>
            <person name="Iida T."/>
        </authorList>
    </citation>
    <scope>NUCLEOTIDE SEQUENCE [LARGE SCALE GENOMIC DNA]</scope>
    <source>
        <strain>RIMD 2210633</strain>
    </source>
</reference>
<dbReference type="EC" id="7.5.2.6" evidence="1"/>
<dbReference type="EMBL" id="BA000031">
    <property type="protein sequence ID" value="BAC59245.1"/>
    <property type="molecule type" value="Genomic_DNA"/>
</dbReference>
<dbReference type="RefSeq" id="NP_797361.1">
    <property type="nucleotide sequence ID" value="NC_004603.1"/>
</dbReference>
<dbReference type="RefSeq" id="WP_005456206.1">
    <property type="nucleotide sequence ID" value="NC_004603.1"/>
</dbReference>
<dbReference type="SMR" id="Q87R16"/>
<dbReference type="GeneID" id="1188486"/>
<dbReference type="KEGG" id="vpa:VP0982"/>
<dbReference type="PATRIC" id="fig|223926.6.peg.931"/>
<dbReference type="eggNOG" id="COG1132">
    <property type="taxonomic scope" value="Bacteria"/>
</dbReference>
<dbReference type="HOGENOM" id="CLU_000604_84_3_6"/>
<dbReference type="Proteomes" id="UP000002493">
    <property type="component" value="Chromosome 1"/>
</dbReference>
<dbReference type="GO" id="GO:0005886">
    <property type="term" value="C:plasma membrane"/>
    <property type="evidence" value="ECO:0007669"/>
    <property type="project" value="UniProtKB-SubCell"/>
</dbReference>
<dbReference type="GO" id="GO:0015421">
    <property type="term" value="F:ABC-type oligopeptide transporter activity"/>
    <property type="evidence" value="ECO:0007669"/>
    <property type="project" value="TreeGrafter"/>
</dbReference>
<dbReference type="GO" id="GO:0005524">
    <property type="term" value="F:ATP binding"/>
    <property type="evidence" value="ECO:0007669"/>
    <property type="project" value="UniProtKB-KW"/>
</dbReference>
<dbReference type="GO" id="GO:0016887">
    <property type="term" value="F:ATP hydrolysis activity"/>
    <property type="evidence" value="ECO:0007669"/>
    <property type="project" value="InterPro"/>
</dbReference>
<dbReference type="GO" id="GO:0034040">
    <property type="term" value="F:ATPase-coupled lipid transmembrane transporter activity"/>
    <property type="evidence" value="ECO:0007669"/>
    <property type="project" value="InterPro"/>
</dbReference>
<dbReference type="CDD" id="cd18552">
    <property type="entry name" value="ABC_6TM_MsbA_like"/>
    <property type="match status" value="1"/>
</dbReference>
<dbReference type="CDD" id="cd03251">
    <property type="entry name" value="ABCC_MsbA"/>
    <property type="match status" value="1"/>
</dbReference>
<dbReference type="FunFam" id="3.40.50.300:FF:000140">
    <property type="entry name" value="Lipid A export ATP-binding/permease protein MsbA"/>
    <property type="match status" value="1"/>
</dbReference>
<dbReference type="Gene3D" id="1.20.1560.10">
    <property type="entry name" value="ABC transporter type 1, transmembrane domain"/>
    <property type="match status" value="1"/>
</dbReference>
<dbReference type="Gene3D" id="3.40.50.300">
    <property type="entry name" value="P-loop containing nucleotide triphosphate hydrolases"/>
    <property type="match status" value="1"/>
</dbReference>
<dbReference type="InterPro" id="IPR003593">
    <property type="entry name" value="AAA+_ATPase"/>
</dbReference>
<dbReference type="InterPro" id="IPR011527">
    <property type="entry name" value="ABC1_TM_dom"/>
</dbReference>
<dbReference type="InterPro" id="IPR036640">
    <property type="entry name" value="ABC1_TM_sf"/>
</dbReference>
<dbReference type="InterPro" id="IPR003439">
    <property type="entry name" value="ABC_transporter-like_ATP-bd"/>
</dbReference>
<dbReference type="InterPro" id="IPR017871">
    <property type="entry name" value="ABC_transporter-like_CS"/>
</dbReference>
<dbReference type="InterPro" id="IPR011917">
    <property type="entry name" value="ABC_transpr_lipidA"/>
</dbReference>
<dbReference type="InterPro" id="IPR027417">
    <property type="entry name" value="P-loop_NTPase"/>
</dbReference>
<dbReference type="InterPro" id="IPR039421">
    <property type="entry name" value="Type_1_exporter"/>
</dbReference>
<dbReference type="NCBIfam" id="TIGR02203">
    <property type="entry name" value="MsbA_lipidA"/>
    <property type="match status" value="1"/>
</dbReference>
<dbReference type="NCBIfam" id="NF008381">
    <property type="entry name" value="PRK11176.1"/>
    <property type="match status" value="1"/>
</dbReference>
<dbReference type="PANTHER" id="PTHR43394:SF1">
    <property type="entry name" value="ATP-BINDING CASSETTE SUB-FAMILY B MEMBER 10, MITOCHONDRIAL"/>
    <property type="match status" value="1"/>
</dbReference>
<dbReference type="PANTHER" id="PTHR43394">
    <property type="entry name" value="ATP-DEPENDENT PERMEASE MDL1, MITOCHONDRIAL"/>
    <property type="match status" value="1"/>
</dbReference>
<dbReference type="Pfam" id="PF00664">
    <property type="entry name" value="ABC_membrane"/>
    <property type="match status" value="1"/>
</dbReference>
<dbReference type="Pfam" id="PF00005">
    <property type="entry name" value="ABC_tran"/>
    <property type="match status" value="1"/>
</dbReference>
<dbReference type="SMART" id="SM00382">
    <property type="entry name" value="AAA"/>
    <property type="match status" value="1"/>
</dbReference>
<dbReference type="SUPFAM" id="SSF90123">
    <property type="entry name" value="ABC transporter transmembrane region"/>
    <property type="match status" value="1"/>
</dbReference>
<dbReference type="SUPFAM" id="SSF52540">
    <property type="entry name" value="P-loop containing nucleoside triphosphate hydrolases"/>
    <property type="match status" value="1"/>
</dbReference>
<dbReference type="PROSITE" id="PS50929">
    <property type="entry name" value="ABC_TM1F"/>
    <property type="match status" value="1"/>
</dbReference>
<dbReference type="PROSITE" id="PS00211">
    <property type="entry name" value="ABC_TRANSPORTER_1"/>
    <property type="match status" value="1"/>
</dbReference>
<dbReference type="PROSITE" id="PS50893">
    <property type="entry name" value="ABC_TRANSPORTER_2"/>
    <property type="match status" value="1"/>
</dbReference>
<dbReference type="PROSITE" id="PS51239">
    <property type="entry name" value="MSBA"/>
    <property type="match status" value="1"/>
</dbReference>
<accession>Q87R16</accession>
<name>MSBA_VIBPA</name>
<feature type="chain" id="PRO_0000092602" description="ATP-dependent lipid A-core flippase">
    <location>
        <begin position="1"/>
        <end position="582"/>
    </location>
</feature>
<feature type="transmembrane region" description="Helical" evidence="1">
    <location>
        <begin position="27"/>
        <end position="47"/>
    </location>
</feature>
<feature type="transmembrane region" description="Helical" evidence="1">
    <location>
        <begin position="69"/>
        <end position="89"/>
    </location>
</feature>
<feature type="transmembrane region" description="Helical" evidence="1">
    <location>
        <begin position="142"/>
        <end position="162"/>
    </location>
</feature>
<feature type="transmembrane region" description="Helical" evidence="1">
    <location>
        <begin position="165"/>
        <end position="185"/>
    </location>
</feature>
<feature type="transmembrane region" description="Helical" evidence="1">
    <location>
        <begin position="249"/>
        <end position="269"/>
    </location>
</feature>
<feature type="domain" description="ABC transmembrane type-1" evidence="1">
    <location>
        <begin position="28"/>
        <end position="310"/>
    </location>
</feature>
<feature type="domain" description="ABC transporter" evidence="1">
    <location>
        <begin position="342"/>
        <end position="578"/>
    </location>
</feature>
<feature type="binding site" evidence="1">
    <location>
        <begin position="376"/>
        <end position="383"/>
    </location>
    <ligand>
        <name>ATP</name>
        <dbReference type="ChEBI" id="CHEBI:30616"/>
    </ligand>
</feature>
<protein>
    <recommendedName>
        <fullName evidence="1">ATP-dependent lipid A-core flippase</fullName>
        <ecNumber evidence="1">7.5.2.6</ecNumber>
    </recommendedName>
    <alternativeName>
        <fullName evidence="1">Lipid A export ATP-binding/permease protein MsbA</fullName>
    </alternativeName>
</protein>
<comment type="function">
    <text evidence="1">Involved in lipopolysaccharide (LPS) biosynthesis. Translocates lipid A-core from the inner to the outer leaflet of the inner membrane. Transmembrane domains (TMD) form a pore in the inner membrane and the ATP-binding domain (NBD) is responsible for energy generation.</text>
</comment>
<comment type="catalytic activity">
    <reaction evidence="1">
        <text>ATP + H2O + lipid A-core oligosaccharideSide 1 = ADP + phosphate + lipid A-core oligosaccharideSide 2.</text>
        <dbReference type="EC" id="7.5.2.6"/>
    </reaction>
</comment>
<comment type="subunit">
    <text evidence="1">Homodimer.</text>
</comment>
<comment type="subcellular location">
    <subcellularLocation>
        <location evidence="1">Cell inner membrane</location>
        <topology evidence="1">Multi-pass membrane protein</topology>
    </subcellularLocation>
</comment>
<comment type="domain">
    <text evidence="1">In MsbA the ATP-binding domain (NBD) and the transmembrane domain (TMD) are fused.</text>
</comment>
<comment type="similarity">
    <text evidence="1">Belongs to the ABC transporter superfamily. Lipid exporter (TC 3.A.1.106) family.</text>
</comment>